<comment type="function">
    <text evidence="1">This enzyme scavenges exogenous and endogenous cytidine and 2'-deoxycytidine for UMP synthesis.</text>
</comment>
<comment type="catalytic activity">
    <reaction evidence="1">
        <text>cytidine + H2O + H(+) = uridine + NH4(+)</text>
        <dbReference type="Rhea" id="RHEA:16069"/>
        <dbReference type="ChEBI" id="CHEBI:15377"/>
        <dbReference type="ChEBI" id="CHEBI:15378"/>
        <dbReference type="ChEBI" id="CHEBI:16704"/>
        <dbReference type="ChEBI" id="CHEBI:17562"/>
        <dbReference type="ChEBI" id="CHEBI:28938"/>
        <dbReference type="EC" id="3.5.4.5"/>
    </reaction>
</comment>
<comment type="catalytic activity">
    <reaction evidence="1">
        <text>2'-deoxycytidine + H2O + H(+) = 2'-deoxyuridine + NH4(+)</text>
        <dbReference type="Rhea" id="RHEA:13433"/>
        <dbReference type="ChEBI" id="CHEBI:15377"/>
        <dbReference type="ChEBI" id="CHEBI:15378"/>
        <dbReference type="ChEBI" id="CHEBI:15698"/>
        <dbReference type="ChEBI" id="CHEBI:16450"/>
        <dbReference type="ChEBI" id="CHEBI:28938"/>
        <dbReference type="EC" id="3.5.4.5"/>
    </reaction>
</comment>
<comment type="cofactor">
    <cofactor evidence="1">
        <name>Zn(2+)</name>
        <dbReference type="ChEBI" id="CHEBI:29105"/>
    </cofactor>
    <text evidence="1">Binds 1 zinc ion.</text>
</comment>
<comment type="subunit">
    <text evidence="1">Homodimer.</text>
</comment>
<comment type="similarity">
    <text evidence="1">Belongs to the cytidine and deoxycytidylate deaminase family.</text>
</comment>
<evidence type="ECO:0000255" key="1">
    <source>
        <dbReference type="HAMAP-Rule" id="MF_01558"/>
    </source>
</evidence>
<evidence type="ECO:0000255" key="2">
    <source>
        <dbReference type="PROSITE-ProRule" id="PRU01083"/>
    </source>
</evidence>
<protein>
    <recommendedName>
        <fullName evidence="1">Cytidine deaminase</fullName>
        <ecNumber evidence="1">3.5.4.5</ecNumber>
    </recommendedName>
    <alternativeName>
        <fullName evidence="1">Cytidine aminohydrolase</fullName>
        <shortName evidence="1">CDA</shortName>
    </alternativeName>
</protein>
<accession>A5F1V7</accession>
<accession>C3LZZ2</accession>
<proteinExistence type="inferred from homology"/>
<gene>
    <name evidence="1" type="primary">cdd</name>
    <name type="ordered locus">VC0395_A0852</name>
    <name type="ordered locus">VC395_1350</name>
</gene>
<name>CDD_VIBC3</name>
<keyword id="KW-0378">Hydrolase</keyword>
<keyword id="KW-0479">Metal-binding</keyword>
<keyword id="KW-0862">Zinc</keyword>
<reference key="1">
    <citation type="submission" date="2007-03" db="EMBL/GenBank/DDBJ databases">
        <authorList>
            <person name="Heidelberg J."/>
        </authorList>
    </citation>
    <scope>NUCLEOTIDE SEQUENCE [LARGE SCALE GENOMIC DNA]</scope>
    <source>
        <strain>ATCC 39541 / Classical Ogawa 395 / O395</strain>
    </source>
</reference>
<reference key="2">
    <citation type="journal article" date="2008" name="PLoS ONE">
        <title>A recalibrated molecular clock and independent origins for the cholera pandemic clones.</title>
        <authorList>
            <person name="Feng L."/>
            <person name="Reeves P.R."/>
            <person name="Lan R."/>
            <person name="Ren Y."/>
            <person name="Gao C."/>
            <person name="Zhou Z."/>
            <person name="Ren Y."/>
            <person name="Cheng J."/>
            <person name="Wang W."/>
            <person name="Wang J."/>
            <person name="Qian W."/>
            <person name="Li D."/>
            <person name="Wang L."/>
        </authorList>
    </citation>
    <scope>NUCLEOTIDE SEQUENCE [LARGE SCALE GENOMIC DNA]</scope>
    <source>
        <strain>ATCC 39541 / Classical Ogawa 395 / O395</strain>
    </source>
</reference>
<organism>
    <name type="scientific">Vibrio cholerae serotype O1 (strain ATCC 39541 / Classical Ogawa 395 / O395)</name>
    <dbReference type="NCBI Taxonomy" id="345073"/>
    <lineage>
        <taxon>Bacteria</taxon>
        <taxon>Pseudomonadati</taxon>
        <taxon>Pseudomonadota</taxon>
        <taxon>Gammaproteobacteria</taxon>
        <taxon>Vibrionales</taxon>
        <taxon>Vibrionaceae</taxon>
        <taxon>Vibrio</taxon>
    </lineage>
</organism>
<feature type="chain" id="PRO_1000073582" description="Cytidine deaminase">
    <location>
        <begin position="1"/>
        <end position="295"/>
    </location>
</feature>
<feature type="domain" description="CMP/dCMP-type deaminase 1" evidence="2">
    <location>
        <begin position="48"/>
        <end position="168"/>
    </location>
</feature>
<feature type="domain" description="CMP/dCMP-type deaminase 2" evidence="2">
    <location>
        <begin position="187"/>
        <end position="295"/>
    </location>
</feature>
<feature type="active site" description="Proton donor" evidence="1">
    <location>
        <position position="104"/>
    </location>
</feature>
<feature type="binding site" evidence="1">
    <location>
        <begin position="89"/>
        <end position="91"/>
    </location>
    <ligand>
        <name>substrate</name>
    </ligand>
</feature>
<feature type="binding site" evidence="1">
    <location>
        <position position="102"/>
    </location>
    <ligand>
        <name>Zn(2+)</name>
        <dbReference type="ChEBI" id="CHEBI:29105"/>
        <note>catalytic</note>
    </ligand>
</feature>
<feature type="binding site" evidence="1">
    <location>
        <position position="129"/>
    </location>
    <ligand>
        <name>Zn(2+)</name>
        <dbReference type="ChEBI" id="CHEBI:29105"/>
        <note>catalytic</note>
    </ligand>
</feature>
<feature type="binding site" evidence="1">
    <location>
        <position position="132"/>
    </location>
    <ligand>
        <name>Zn(2+)</name>
        <dbReference type="ChEBI" id="CHEBI:29105"/>
        <note>catalytic</note>
    </ligand>
</feature>
<dbReference type="EC" id="3.5.4.5" evidence="1"/>
<dbReference type="EMBL" id="CP000627">
    <property type="protein sequence ID" value="ABQ21759.1"/>
    <property type="molecule type" value="Genomic_DNA"/>
</dbReference>
<dbReference type="EMBL" id="CP001235">
    <property type="protein sequence ID" value="ACP09358.1"/>
    <property type="molecule type" value="Genomic_DNA"/>
</dbReference>
<dbReference type="RefSeq" id="WP_001245911.1">
    <property type="nucleotide sequence ID" value="NZ_JAACZH010000002.1"/>
</dbReference>
<dbReference type="SMR" id="A5F1V7"/>
<dbReference type="KEGG" id="vco:VC0395_A0852"/>
<dbReference type="KEGG" id="vcr:VC395_1350"/>
<dbReference type="PATRIC" id="fig|345073.21.peg.1311"/>
<dbReference type="eggNOG" id="COG0295">
    <property type="taxonomic scope" value="Bacteria"/>
</dbReference>
<dbReference type="HOGENOM" id="CLU_052424_0_0_6"/>
<dbReference type="OrthoDB" id="9795347at2"/>
<dbReference type="Proteomes" id="UP000000249">
    <property type="component" value="Chromosome 2"/>
</dbReference>
<dbReference type="GO" id="GO:0005829">
    <property type="term" value="C:cytosol"/>
    <property type="evidence" value="ECO:0007669"/>
    <property type="project" value="TreeGrafter"/>
</dbReference>
<dbReference type="GO" id="GO:0004126">
    <property type="term" value="F:cytidine deaminase activity"/>
    <property type="evidence" value="ECO:0007669"/>
    <property type="project" value="UniProtKB-UniRule"/>
</dbReference>
<dbReference type="GO" id="GO:0042802">
    <property type="term" value="F:identical protein binding"/>
    <property type="evidence" value="ECO:0007669"/>
    <property type="project" value="UniProtKB-ARBA"/>
</dbReference>
<dbReference type="GO" id="GO:0008270">
    <property type="term" value="F:zinc ion binding"/>
    <property type="evidence" value="ECO:0007669"/>
    <property type="project" value="UniProtKB-UniRule"/>
</dbReference>
<dbReference type="GO" id="GO:0009972">
    <property type="term" value="P:cytidine deamination"/>
    <property type="evidence" value="ECO:0007669"/>
    <property type="project" value="InterPro"/>
</dbReference>
<dbReference type="CDD" id="cd01283">
    <property type="entry name" value="cytidine_deaminase"/>
    <property type="match status" value="2"/>
</dbReference>
<dbReference type="FunFam" id="3.40.140.10:FF:000007">
    <property type="entry name" value="Cytidine deaminase"/>
    <property type="match status" value="1"/>
</dbReference>
<dbReference type="Gene3D" id="3.40.140.10">
    <property type="entry name" value="Cytidine Deaminase, domain 2"/>
    <property type="match status" value="2"/>
</dbReference>
<dbReference type="HAMAP" id="MF_01558">
    <property type="entry name" value="Cyt_deam"/>
    <property type="match status" value="1"/>
</dbReference>
<dbReference type="InterPro" id="IPR016192">
    <property type="entry name" value="APOBEC/CMP_deaminase_Zn-bd"/>
</dbReference>
<dbReference type="InterPro" id="IPR002125">
    <property type="entry name" value="CMP_dCMP_dom"/>
</dbReference>
<dbReference type="InterPro" id="IPR013171">
    <property type="entry name" value="Cyd/dCyd_deaminase_Zn-bd"/>
</dbReference>
<dbReference type="InterPro" id="IPR050202">
    <property type="entry name" value="Cyt/Deoxycyt_deaminase"/>
</dbReference>
<dbReference type="InterPro" id="IPR006263">
    <property type="entry name" value="Cyt_deam_dimer"/>
</dbReference>
<dbReference type="InterPro" id="IPR016193">
    <property type="entry name" value="Cytidine_deaminase-like"/>
</dbReference>
<dbReference type="InterPro" id="IPR020797">
    <property type="entry name" value="Cytidine_deaminase_bacteria"/>
</dbReference>
<dbReference type="NCBIfam" id="TIGR01355">
    <property type="entry name" value="cyt_deam_dimer"/>
    <property type="match status" value="1"/>
</dbReference>
<dbReference type="NCBIfam" id="NF006537">
    <property type="entry name" value="PRK09027.1"/>
    <property type="match status" value="1"/>
</dbReference>
<dbReference type="PANTHER" id="PTHR11644">
    <property type="entry name" value="CYTIDINE DEAMINASE"/>
    <property type="match status" value="1"/>
</dbReference>
<dbReference type="PANTHER" id="PTHR11644:SF2">
    <property type="entry name" value="CYTIDINE DEAMINASE"/>
    <property type="match status" value="1"/>
</dbReference>
<dbReference type="Pfam" id="PF00383">
    <property type="entry name" value="dCMP_cyt_deam_1"/>
    <property type="match status" value="1"/>
</dbReference>
<dbReference type="Pfam" id="PF08211">
    <property type="entry name" value="dCMP_cyt_deam_2"/>
    <property type="match status" value="1"/>
</dbReference>
<dbReference type="PIRSF" id="PIRSF006334">
    <property type="entry name" value="Cdd_plus_pseudo"/>
    <property type="match status" value="1"/>
</dbReference>
<dbReference type="SUPFAM" id="SSF53927">
    <property type="entry name" value="Cytidine deaminase-like"/>
    <property type="match status" value="2"/>
</dbReference>
<dbReference type="PROSITE" id="PS00903">
    <property type="entry name" value="CYT_DCMP_DEAMINASES_1"/>
    <property type="match status" value="1"/>
</dbReference>
<dbReference type="PROSITE" id="PS51747">
    <property type="entry name" value="CYT_DCMP_DEAMINASES_2"/>
    <property type="match status" value="2"/>
</dbReference>
<sequence length="295" mass="31989">MRNRIEQALQQMPASFAPYLRELVLAKDFDATFSAEQYQQLLTLSGMEDSDLRVALLPIAAAYSYAPISEFYVGAIVRGISGRLYLGANMEFTGAQLGQTVHAEQCAISHAWMKGEKGVADITINFSPCGHCRQFMNELTTASSLKIQLPKRAAKTLQEYLPESFGPADLGIDSGLMSPVNHGKTSDDDEELIQQALRAMNISHSPYTQNFSGVALKMRSGAIYLGAYAENAAFNPSLPPLQVALAQAMMMGESFEDIEAAALVESATGKISHLADTQATLEVINPDIPLSYLSL</sequence>